<sequence length="161" mass="18194">MPSFDTVCEANFVEVKNAVENTAKEIGTRFDFKGTSAAVELKDKEITLFGDADFQLQQVEDILRNKLTKRNVDVRFLDVQKPQKIGGDKLKQVVKVKNGIDSEQAKKIQRLIKDSKLKLQAAIQEDKVRVTGAKRDDLQAAMALIRKDIADLPLTFDNFRD</sequence>
<reference key="1">
    <citation type="submission" date="2009-01" db="EMBL/GenBank/DDBJ databases">
        <title>Complete sequence of Diaphorobacter sp. TPSY.</title>
        <authorList>
            <consortium name="US DOE Joint Genome Institute"/>
            <person name="Lucas S."/>
            <person name="Copeland A."/>
            <person name="Lapidus A."/>
            <person name="Glavina del Rio T."/>
            <person name="Tice H."/>
            <person name="Bruce D."/>
            <person name="Goodwin L."/>
            <person name="Pitluck S."/>
            <person name="Chertkov O."/>
            <person name="Brettin T."/>
            <person name="Detter J.C."/>
            <person name="Han C."/>
            <person name="Larimer F."/>
            <person name="Land M."/>
            <person name="Hauser L."/>
            <person name="Kyrpides N."/>
            <person name="Mikhailova N."/>
            <person name="Coates J.D."/>
        </authorList>
    </citation>
    <scope>NUCLEOTIDE SEQUENCE [LARGE SCALE GENOMIC DNA]</scope>
    <source>
        <strain>TPSY</strain>
    </source>
</reference>
<gene>
    <name type="ordered locus">Dtpsy_2240</name>
</gene>
<comment type="function">
    <text evidence="1">Nucleotide-binding protein.</text>
</comment>
<comment type="similarity">
    <text evidence="1">Belongs to the YajQ family.</text>
</comment>
<evidence type="ECO:0000255" key="1">
    <source>
        <dbReference type="HAMAP-Rule" id="MF_00632"/>
    </source>
</evidence>
<proteinExistence type="inferred from homology"/>
<accession>B9MBJ9</accession>
<organism>
    <name type="scientific">Acidovorax ebreus (strain TPSY)</name>
    <name type="common">Diaphorobacter sp. (strain TPSY)</name>
    <dbReference type="NCBI Taxonomy" id="535289"/>
    <lineage>
        <taxon>Bacteria</taxon>
        <taxon>Pseudomonadati</taxon>
        <taxon>Pseudomonadota</taxon>
        <taxon>Betaproteobacteria</taxon>
        <taxon>Burkholderiales</taxon>
        <taxon>Comamonadaceae</taxon>
        <taxon>Diaphorobacter</taxon>
    </lineage>
</organism>
<feature type="chain" id="PRO_1000147302" description="Nucleotide-binding protein Dtpsy_2240">
    <location>
        <begin position="1"/>
        <end position="161"/>
    </location>
</feature>
<protein>
    <recommendedName>
        <fullName evidence="1">Nucleotide-binding protein Dtpsy_2240</fullName>
    </recommendedName>
</protein>
<name>Y2240_ACIET</name>
<dbReference type="EMBL" id="CP001392">
    <property type="protein sequence ID" value="ACM33678.1"/>
    <property type="molecule type" value="Genomic_DNA"/>
</dbReference>
<dbReference type="RefSeq" id="WP_015913669.1">
    <property type="nucleotide sequence ID" value="NC_011992.1"/>
</dbReference>
<dbReference type="SMR" id="B9MBJ9"/>
<dbReference type="KEGG" id="dia:Dtpsy_2240"/>
<dbReference type="eggNOG" id="COG1666">
    <property type="taxonomic scope" value="Bacteria"/>
</dbReference>
<dbReference type="HOGENOM" id="CLU_099839_1_0_4"/>
<dbReference type="Proteomes" id="UP000000450">
    <property type="component" value="Chromosome"/>
</dbReference>
<dbReference type="GO" id="GO:0005829">
    <property type="term" value="C:cytosol"/>
    <property type="evidence" value="ECO:0007669"/>
    <property type="project" value="TreeGrafter"/>
</dbReference>
<dbReference type="GO" id="GO:0000166">
    <property type="term" value="F:nucleotide binding"/>
    <property type="evidence" value="ECO:0007669"/>
    <property type="project" value="TreeGrafter"/>
</dbReference>
<dbReference type="CDD" id="cd11740">
    <property type="entry name" value="YajQ_like"/>
    <property type="match status" value="1"/>
</dbReference>
<dbReference type="Gene3D" id="3.30.70.860">
    <property type="match status" value="1"/>
</dbReference>
<dbReference type="Gene3D" id="3.30.70.990">
    <property type="entry name" value="YajQ-like, domain 2"/>
    <property type="match status" value="1"/>
</dbReference>
<dbReference type="HAMAP" id="MF_00632">
    <property type="entry name" value="YajQ"/>
    <property type="match status" value="1"/>
</dbReference>
<dbReference type="InterPro" id="IPR007551">
    <property type="entry name" value="DUF520"/>
</dbReference>
<dbReference type="InterPro" id="IPR035571">
    <property type="entry name" value="UPF0234-like_C"/>
</dbReference>
<dbReference type="InterPro" id="IPR035570">
    <property type="entry name" value="UPF0234_N"/>
</dbReference>
<dbReference type="InterPro" id="IPR036183">
    <property type="entry name" value="YajQ-like_sf"/>
</dbReference>
<dbReference type="NCBIfam" id="NF003819">
    <property type="entry name" value="PRK05412.1"/>
    <property type="match status" value="1"/>
</dbReference>
<dbReference type="PANTHER" id="PTHR30476">
    <property type="entry name" value="UPF0234 PROTEIN YAJQ"/>
    <property type="match status" value="1"/>
</dbReference>
<dbReference type="PANTHER" id="PTHR30476:SF0">
    <property type="entry name" value="UPF0234 PROTEIN YAJQ"/>
    <property type="match status" value="1"/>
</dbReference>
<dbReference type="Pfam" id="PF04461">
    <property type="entry name" value="DUF520"/>
    <property type="match status" value="1"/>
</dbReference>
<dbReference type="SUPFAM" id="SSF89963">
    <property type="entry name" value="YajQ-like"/>
    <property type="match status" value="2"/>
</dbReference>
<keyword id="KW-0547">Nucleotide-binding</keyword>
<keyword id="KW-1185">Reference proteome</keyword>